<sequence length="1407" mass="161471">MMSFSKNATPRAIVSESSTLHEMKFRNFRVAHEKISLDIDLATHCITGSATIIIIPLIQNLEYVTFDCKEMTIKDVLVENRRCDQFIHDDPLQTNLNGLTSQNVLYSDNSIEQSHFLRSKFASLNEYPETDSKSQLTIKIPSSIKISLEDANALSNYTPITPSIKTTPGFQESVFTPITLQIEYEIRNPKSGIKFDTVYADKPWLWNVYTSNGEICSSASYWVPCVDLLDEKSTWELEFSVPRLVKNIGTSKLIGQNGEESEKEKEDTPEHDEEEEGKPARVIKDEDKDSNLKNDEEGKNSKSKDAQDNDEEEEEGESDEEEEEGEEERRNIEESNNPSLRDVIVCCSEYSNIKELPHPIDLTKKKCIFQIINPVAPHHIGWAIGAFNSWSLPLISPPSVDAEDEVEEDKLRENVVDNVNDTMDDDIGSDIIPIQIFTLPTQETDELTVINSTVVCQKIIDFYSKEFGSYPFTCYSMVFLPTAPSKHMDFAALGICNTRLLYPLEVIDKAFSTTNELAWALANQWSCVNITPLDMNDYWCCLGIAGYMVFQVTKKLMGNNTYKYQLKRNSEAIVEQDFEKPPIGSTFTGSSRPISWSSKDLSFIQLKAPMILHILDRRMTKTERSFGMSRVLPKIFLQAMSGDLPNNSLTSSHFQHVCERVNKSKLENFFNEWVYGSGVPILRVTQRFNRKRMVIELGIRQVQDEELGHEKVVGEEGFFKSALDHLEHPDLNRTECFTGSMTIRIHEHDGTPYEHIVEIKDTFTKIDIQYNTKYRRLRKRGGGANDENGVENNNEEKPIVVDVNCLGNVYMSPEECSRFSLTEFNRTSESNELLKQNEAFEWIRIDSDLEWICQMHINQPDYMFSSQLRQDGDIEAQLEAIRYYEDVVVNGGVKSLVYSSILFRTAIDERYFFGIRLAACEALSKYVYDPDFTGGVKHLIQIFQILFCLEDSNIPKSNNFENPKLYFLQCNIPKYLAKVKNENGKCPKLVKQFLLDILVYNENGENKYSDDAYVRSLIENVVKVALNEYKDKAYMEKVKTQLLRYENLVNWLSSYESLIKTTIMYAKYKLHKVGAYDFTELTGMIMHTLTLGINNGDISRESFQNEFLMVLKIMLLEGGLKNKDALVLFTEILCFHEDSYIRDKSVDVLSECVNLVVMDGSLDTISDDIKSSVQSVHNEVKNIKSEDDIELFLSGHYVDDMKIKIEKIGRQNISGLIQICRDMFKGYSPLKILLWDVLNLPVLSLYQRKQIHDLVRVMYTLINSFVVRLETPRERRLVAKMNSNEEGKLDIVIKRESILKVHIKKEVTSTVEAPKKANKIKISLKGDKPVRKVEKQIVKPKVTSKQRKVKSHVNRMGSLPLRFVKIQQQPRVMVHLSSVPYSQFVQITKVTSRSFMVKIRTKNDAKN</sequence>
<reference key="1">
    <citation type="journal article" date="1991" name="Yeast">
        <title>The MAT locus revisited within a 9.8 kb fragment of chromosome III containing BUD5 and two new open reading frames.</title>
        <authorList>
            <person name="Jacquet M."/>
            <person name="Buhler J.-M."/>
            <person name="Iborra F."/>
            <person name="Francingues-Gaillard M.-C."/>
            <person name="Soustelle C."/>
        </authorList>
    </citation>
    <scope>NUCLEOTIDE SEQUENCE [GENOMIC DNA]</scope>
</reference>
<reference key="2">
    <citation type="journal article" date="1991" name="Curr. Genet.">
        <title>The TSM1 gene of Saccharomyces cerevisiae overlaps the MAT locus.</title>
        <authorList>
            <person name="Ray B.L."/>
            <person name="White C.I."/>
            <person name="Haber J.E."/>
        </authorList>
    </citation>
    <scope>NUCLEOTIDE SEQUENCE [GENOMIC DNA]</scope>
    <source>
        <strain>RY570</strain>
    </source>
</reference>
<reference key="3">
    <citation type="journal article" date="1992" name="Nature">
        <title>The complete DNA sequence of yeast chromosome III.</title>
        <authorList>
            <person name="Oliver S.G."/>
            <person name="van der Aart Q.J.M."/>
            <person name="Agostoni-Carbone M.L."/>
            <person name="Aigle M."/>
            <person name="Alberghina L."/>
            <person name="Alexandraki D."/>
            <person name="Antoine G."/>
            <person name="Anwar R."/>
            <person name="Ballesta J.P.G."/>
            <person name="Benit P."/>
            <person name="Berben G."/>
            <person name="Bergantino E."/>
            <person name="Biteau N."/>
            <person name="Bolle P.-A."/>
            <person name="Bolotin-Fukuhara M."/>
            <person name="Brown A."/>
            <person name="Brown A.J.P."/>
            <person name="Buhler J.-M."/>
            <person name="Carcano C."/>
            <person name="Carignani G."/>
            <person name="Cederberg H."/>
            <person name="Chanet R."/>
            <person name="Contreras R."/>
            <person name="Crouzet M."/>
            <person name="Daignan-Fornier B."/>
            <person name="Defoor E."/>
            <person name="Delgado M.D."/>
            <person name="Demolder J."/>
            <person name="Doira C."/>
            <person name="Dubois E."/>
            <person name="Dujon B."/>
            <person name="Duesterhoeft A."/>
            <person name="Erdmann D."/>
            <person name="Esteban M."/>
            <person name="Fabre F."/>
            <person name="Fairhead C."/>
            <person name="Faye G."/>
            <person name="Feldmann H."/>
            <person name="Fiers W."/>
            <person name="Francingues-Gaillard M.-C."/>
            <person name="Franco L."/>
            <person name="Frontali L."/>
            <person name="Fukuhara H."/>
            <person name="Fuller L.J."/>
            <person name="Galland P."/>
            <person name="Gent M.E."/>
            <person name="Gigot D."/>
            <person name="Gilliquet V."/>
            <person name="Glansdorff N."/>
            <person name="Goffeau A."/>
            <person name="Grenson M."/>
            <person name="Grisanti P."/>
            <person name="Grivell L.A."/>
            <person name="de Haan M."/>
            <person name="Haasemann M."/>
            <person name="Hatat D."/>
            <person name="Hoenicka J."/>
            <person name="Hegemann J.H."/>
            <person name="Herbert C.J."/>
            <person name="Hilger F."/>
            <person name="Hohmann S."/>
            <person name="Hollenberg C.P."/>
            <person name="Huse K."/>
            <person name="Iborra F."/>
            <person name="Indge K.J."/>
            <person name="Isono K."/>
            <person name="Jacq C."/>
            <person name="Jacquet M."/>
            <person name="James C.M."/>
            <person name="Jauniaux J.-C."/>
            <person name="Jia Y."/>
            <person name="Jimenez A."/>
            <person name="Kelly A."/>
            <person name="Kleinhans U."/>
            <person name="Kreisl P."/>
            <person name="Lanfranchi G."/>
            <person name="Lewis C."/>
            <person name="van der Linden C.G."/>
            <person name="Lucchini G."/>
            <person name="Lutzenkirchen K."/>
            <person name="Maat M.J."/>
            <person name="Mallet L."/>
            <person name="Mannhaupt G."/>
            <person name="Martegani E."/>
            <person name="Mathieu A."/>
            <person name="Maurer C.T.C."/>
            <person name="McConnell D."/>
            <person name="McKee R.A."/>
            <person name="Messenguy F."/>
            <person name="Mewes H.-W."/>
            <person name="Molemans F."/>
            <person name="Montague M.A."/>
            <person name="Muzi Falconi M."/>
            <person name="Navas L."/>
            <person name="Newlon C.S."/>
            <person name="Noone D."/>
            <person name="Pallier C."/>
            <person name="Panzeri L."/>
            <person name="Pearson B.M."/>
            <person name="Perea J."/>
            <person name="Philippsen P."/>
            <person name="Pierard A."/>
            <person name="Planta R.J."/>
            <person name="Plevani P."/>
            <person name="Poetsch B."/>
            <person name="Pohl F.M."/>
            <person name="Purnelle B."/>
            <person name="Ramezani Rad M."/>
            <person name="Rasmussen S.W."/>
            <person name="Raynal A."/>
            <person name="Remacha M.A."/>
            <person name="Richterich P."/>
            <person name="Roberts A.B."/>
            <person name="Rodriguez F."/>
            <person name="Sanz E."/>
            <person name="Schaaff-Gerstenschlaeger I."/>
            <person name="Scherens B."/>
            <person name="Schweitzer B."/>
            <person name="Shu Y."/>
            <person name="Skala J."/>
            <person name="Slonimski P.P."/>
            <person name="Sor F."/>
            <person name="Soustelle C."/>
            <person name="Spiegelberg R."/>
            <person name="Stateva L.I."/>
            <person name="Steensma H.Y."/>
            <person name="Steiner S."/>
            <person name="Thierry A."/>
            <person name="Thireos G."/>
            <person name="Tzermia M."/>
            <person name="Urrestarazu L.A."/>
            <person name="Valle G."/>
            <person name="Vetter I."/>
            <person name="van Vliet-Reedijk J.C."/>
            <person name="Voet M."/>
            <person name="Volckaert G."/>
            <person name="Vreken P."/>
            <person name="Wang H."/>
            <person name="Warmington J.R."/>
            <person name="von Wettstein D."/>
            <person name="Wicksteed B.L."/>
            <person name="Wilson C."/>
            <person name="Wurst H."/>
            <person name="Xu G."/>
            <person name="Yoshikawa A."/>
            <person name="Zimmermann F.K."/>
            <person name="Sgouros J.G."/>
        </authorList>
    </citation>
    <scope>NUCLEOTIDE SEQUENCE [LARGE SCALE GENOMIC DNA]</scope>
    <source>
        <strain>ATCC 204508 / S288c</strain>
    </source>
</reference>
<reference key="4">
    <citation type="journal article" date="2014" name="G3 (Bethesda)">
        <title>The reference genome sequence of Saccharomyces cerevisiae: Then and now.</title>
        <authorList>
            <person name="Engel S.R."/>
            <person name="Dietrich F.S."/>
            <person name="Fisk D.G."/>
            <person name="Binkley G."/>
            <person name="Balakrishnan R."/>
            <person name="Costanzo M.C."/>
            <person name="Dwight S.S."/>
            <person name="Hitz B.C."/>
            <person name="Karra K."/>
            <person name="Nash R.S."/>
            <person name="Weng S."/>
            <person name="Wong E.D."/>
            <person name="Lloyd P."/>
            <person name="Skrzypek M.S."/>
            <person name="Miyasato S.R."/>
            <person name="Simison M."/>
            <person name="Cherry J.M."/>
        </authorList>
    </citation>
    <scope>GENOME REANNOTATION</scope>
    <source>
        <strain>ATCC 204508 / S288c</strain>
    </source>
</reference>
<reference key="5">
    <citation type="journal article" date="1995" name="Proc. Natl. Acad. Sci. U.S.A.">
        <title>Identification and characterization of a TFIID-like multiprotein complex from Saccharomyces cerevisiae.</title>
        <authorList>
            <person name="Poon D."/>
            <person name="Bai Y."/>
            <person name="Campbell A.M."/>
            <person name="Bjorklund S."/>
            <person name="Kim Y.-J."/>
            <person name="Zhou S."/>
            <person name="Kornberg R.D."/>
            <person name="Weil P.A."/>
        </authorList>
    </citation>
    <scope>PROTEIN SEQUENCE OF 165-174 AND 991-1000</scope>
    <scope>CHARACTERIZATION</scope>
    <source>
        <strain>ATCC 76621 / YPH252</strain>
    </source>
</reference>
<reference key="6">
    <citation type="journal article" date="2000" name="J. Biol. Chem.">
        <title>Identification of two novel TAF subunits of the yeast Saccharomyces cerevisiae TFIID complex.</title>
        <authorList>
            <person name="Sanders S.L."/>
            <person name="Weil P.A."/>
        </authorList>
    </citation>
    <scope>FUNCTION</scope>
    <scope>SUBUNIT</scope>
</reference>
<reference key="7">
    <citation type="journal article" date="2002" name="Mol. Cell. Biol.">
        <title>Molecular characterization of Saccharomyces cerevisiae TFIID.</title>
        <authorList>
            <person name="Sanders S.L."/>
            <person name="Garbett K.A."/>
            <person name="Weil P.A."/>
        </authorList>
    </citation>
    <scope>FUNCTION</scope>
    <scope>TFIID STOICHIOMETRY</scope>
</reference>
<reference key="8">
    <citation type="journal article" date="2002" name="Plant Mol. Biol.">
        <title>Multi-protein complexes in eukaryotic gene transcription.</title>
        <authorList>
            <person name="Martinez E."/>
        </authorList>
    </citation>
    <scope>FUNCTION</scope>
</reference>
<reference key="9">
    <citation type="journal article" date="2003" name="Nature">
        <title>Global analysis of protein expression in yeast.</title>
        <authorList>
            <person name="Ghaemmaghami S."/>
            <person name="Huh W.-K."/>
            <person name="Bower K."/>
            <person name="Howson R.W."/>
            <person name="Belle A."/>
            <person name="Dephoure N."/>
            <person name="O'Shea E.K."/>
            <person name="Weissman J.S."/>
        </authorList>
    </citation>
    <scope>LEVEL OF PROTEIN EXPRESSION [LARGE SCALE ANALYSIS]</scope>
</reference>
<reference key="10">
    <citation type="journal article" date="2002" name="EMBO J.">
        <title>Mapping histone fold TAFs within yeast TFIID.</title>
        <authorList>
            <person name="Leurent C."/>
            <person name="Sanders S.L."/>
            <person name="Ruhlmann C."/>
            <person name="Mallouh V."/>
            <person name="Weil P.A."/>
            <person name="Kirschner D.B."/>
            <person name="Tora L."/>
            <person name="Schultz P."/>
        </authorList>
    </citation>
    <scope>3D-STRUCTURE</scope>
    <scope>ELECTRON MICROSCOPY OF TFIID</scope>
</reference>
<reference key="11">
    <citation type="journal article" date="2007" name="J. Proteome Res.">
        <title>Large-scale phosphorylation analysis of alpha-factor-arrested Saccharomyces cerevisiae.</title>
        <authorList>
            <person name="Li X."/>
            <person name="Gerber S.A."/>
            <person name="Rudner A.D."/>
            <person name="Beausoleil S.A."/>
            <person name="Haas W."/>
            <person name="Villen J."/>
            <person name="Elias J.E."/>
            <person name="Gygi S.P."/>
        </authorList>
    </citation>
    <scope>PHOSPHORYLATION [LARGE SCALE ANALYSIS] AT SER-318</scope>
    <scope>IDENTIFICATION BY MASS SPECTROMETRY [LARGE SCALE ANALYSIS]</scope>
    <source>
        <strain>ADR376</strain>
    </source>
</reference>
<reference key="12">
    <citation type="journal article" date="2008" name="Mol. Cell. Proteomics">
        <title>A multidimensional chromatography technology for in-depth phosphoproteome analysis.</title>
        <authorList>
            <person name="Albuquerque C.P."/>
            <person name="Smolka M.B."/>
            <person name="Payne S.H."/>
            <person name="Bafna V."/>
            <person name="Eng J."/>
            <person name="Zhou H."/>
        </authorList>
    </citation>
    <scope>PHOSPHORYLATION [LARGE SCALE ANALYSIS] AT THR-161</scope>
    <scope>IDENTIFICATION BY MASS SPECTROMETRY [LARGE SCALE ANALYSIS]</scope>
</reference>
<reference key="13">
    <citation type="journal article" date="2009" name="Science">
        <title>Global analysis of Cdk1 substrate phosphorylation sites provides insights into evolution.</title>
        <authorList>
            <person name="Holt L.J."/>
            <person name="Tuch B.B."/>
            <person name="Villen J."/>
            <person name="Johnson A.D."/>
            <person name="Gygi S.P."/>
            <person name="Morgan D.O."/>
        </authorList>
    </citation>
    <scope>PHOSPHORYLATION [LARGE SCALE ANALYSIS] AT THR-158; THR-161 AND SER-163</scope>
    <scope>IDENTIFICATION BY MASS SPECTROMETRY [LARGE SCALE ANALYSIS]</scope>
</reference>
<accession>P23255</accession>
<accession>D6VR51</accession>
<organism>
    <name type="scientific">Saccharomyces cerevisiae (strain ATCC 204508 / S288c)</name>
    <name type="common">Baker's yeast</name>
    <dbReference type="NCBI Taxonomy" id="559292"/>
    <lineage>
        <taxon>Eukaryota</taxon>
        <taxon>Fungi</taxon>
        <taxon>Dikarya</taxon>
        <taxon>Ascomycota</taxon>
        <taxon>Saccharomycotina</taxon>
        <taxon>Saccharomycetes</taxon>
        <taxon>Saccharomycetales</taxon>
        <taxon>Saccharomycetaceae</taxon>
        <taxon>Saccharomyces</taxon>
    </lineage>
</organism>
<dbReference type="EMBL" id="X63853">
    <property type="protein sequence ID" value="CAA45337.1"/>
    <property type="molecule type" value="Genomic_DNA"/>
</dbReference>
<dbReference type="EMBL" id="M60486">
    <property type="protein sequence ID" value="AAA35179.1"/>
    <property type="molecule type" value="Genomic_DNA"/>
</dbReference>
<dbReference type="EMBL" id="X59720">
    <property type="protein sequence ID" value="CAA42290.1"/>
    <property type="molecule type" value="Genomic_DNA"/>
</dbReference>
<dbReference type="EMBL" id="BK006937">
    <property type="protein sequence ID" value="DAA07520.1"/>
    <property type="molecule type" value="Genomic_DNA"/>
</dbReference>
<dbReference type="PIR" id="S19455">
    <property type="entry name" value="BWBYM1"/>
</dbReference>
<dbReference type="RefSeq" id="NP_009971.1">
    <property type="nucleotide sequence ID" value="NM_001178756.1"/>
</dbReference>
<dbReference type="PDB" id="7UHE">
    <property type="method" value="X-ray"/>
    <property type="resolution" value="1.66 A"/>
    <property type="chains" value="B/D=1392-1403"/>
</dbReference>
<dbReference type="PDBsum" id="7UHE"/>
<dbReference type="SMR" id="P23255"/>
<dbReference type="BioGRID" id="31024">
    <property type="interactions" value="58"/>
</dbReference>
<dbReference type="ComplexPortal" id="CPX-1642">
    <property type="entry name" value="General transcription factor complex TFIID"/>
</dbReference>
<dbReference type="DIP" id="DIP-343N"/>
<dbReference type="FunCoup" id="P23255">
    <property type="interactions" value="767"/>
</dbReference>
<dbReference type="IntAct" id="P23255">
    <property type="interactions" value="24"/>
</dbReference>
<dbReference type="MINT" id="P23255"/>
<dbReference type="STRING" id="4932.YCR042C"/>
<dbReference type="GlyGen" id="P23255">
    <property type="glycosylation" value="1 site"/>
</dbReference>
<dbReference type="iPTMnet" id="P23255"/>
<dbReference type="PaxDb" id="4932-YCR042C"/>
<dbReference type="PeptideAtlas" id="P23255"/>
<dbReference type="EnsemblFungi" id="YCR042C_mRNA">
    <property type="protein sequence ID" value="YCR042C"/>
    <property type="gene ID" value="YCR042C"/>
</dbReference>
<dbReference type="GeneID" id="850409"/>
<dbReference type="KEGG" id="sce:YCR042C"/>
<dbReference type="AGR" id="SGD:S000000638"/>
<dbReference type="SGD" id="S000000638">
    <property type="gene designation" value="TAF2"/>
</dbReference>
<dbReference type="VEuPathDB" id="FungiDB:YCR042C"/>
<dbReference type="eggNOG" id="KOG1932">
    <property type="taxonomic scope" value="Eukaryota"/>
</dbReference>
<dbReference type="GeneTree" id="ENSGT00390000000420"/>
<dbReference type="HOGENOM" id="CLU_002317_2_0_1"/>
<dbReference type="InParanoid" id="P23255"/>
<dbReference type="OMA" id="TDLFMKK"/>
<dbReference type="OrthoDB" id="308861at2759"/>
<dbReference type="BioCyc" id="YEAST:G3O-29353-MONOMER"/>
<dbReference type="Reactome" id="R-SCE-674695">
    <property type="pathway name" value="RNA Polymerase II Pre-transcription Events"/>
</dbReference>
<dbReference type="Reactome" id="R-SCE-73776">
    <property type="pathway name" value="RNA Polymerase II Promoter Escape"/>
</dbReference>
<dbReference type="Reactome" id="R-SCE-73779">
    <property type="pathway name" value="RNA Polymerase II Transcription Pre-Initiation And Promoter Opening"/>
</dbReference>
<dbReference type="Reactome" id="R-SCE-75953">
    <property type="pathway name" value="RNA Polymerase II Transcription Initiation"/>
</dbReference>
<dbReference type="Reactome" id="R-SCE-76042">
    <property type="pathway name" value="RNA Polymerase II Transcription Initiation And Promoter Clearance"/>
</dbReference>
<dbReference type="BioGRID-ORCS" id="850409">
    <property type="hits" value="0 hits in 10 CRISPR screens"/>
</dbReference>
<dbReference type="PRO" id="PR:P23255"/>
<dbReference type="Proteomes" id="UP000002311">
    <property type="component" value="Chromosome III"/>
</dbReference>
<dbReference type="RNAct" id="P23255">
    <property type="molecule type" value="protein"/>
</dbReference>
<dbReference type="GO" id="GO:0005634">
    <property type="term" value="C:nucleus"/>
    <property type="evidence" value="ECO:0000303"/>
    <property type="project" value="ComplexPortal"/>
</dbReference>
<dbReference type="GO" id="GO:0005669">
    <property type="term" value="C:transcription factor TFIID complex"/>
    <property type="evidence" value="ECO:0000314"/>
    <property type="project" value="SGD"/>
</dbReference>
<dbReference type="GO" id="GO:0003682">
    <property type="term" value="F:chromatin binding"/>
    <property type="evidence" value="ECO:0000314"/>
    <property type="project" value="SGD"/>
</dbReference>
<dbReference type="GO" id="GO:0000976">
    <property type="term" value="F:transcription cis-regulatory region binding"/>
    <property type="evidence" value="ECO:0000318"/>
    <property type="project" value="GO_Central"/>
</dbReference>
<dbReference type="GO" id="GO:0045944">
    <property type="term" value="P:positive regulation of transcription by RNA polymerase II"/>
    <property type="evidence" value="ECO:0000314"/>
    <property type="project" value="ComplexPortal"/>
</dbReference>
<dbReference type="GO" id="GO:0006366">
    <property type="term" value="P:transcription by RNA polymerase II"/>
    <property type="evidence" value="ECO:0000314"/>
    <property type="project" value="SGD"/>
</dbReference>
<dbReference type="GO" id="GO:0006367">
    <property type="term" value="P:transcription initiation at RNA polymerase II promoter"/>
    <property type="evidence" value="ECO:0000318"/>
    <property type="project" value="GO_Central"/>
</dbReference>
<dbReference type="CDD" id="cd09839">
    <property type="entry name" value="M1_like_TAF2"/>
    <property type="match status" value="1"/>
</dbReference>
<dbReference type="FunFam" id="1.10.390.10:FF:000011">
    <property type="entry name" value="Transcription initiation factor TFIID subunit"/>
    <property type="match status" value="1"/>
</dbReference>
<dbReference type="Gene3D" id="1.10.390.10">
    <property type="entry name" value="Neutral Protease Domain 2"/>
    <property type="match status" value="1"/>
</dbReference>
<dbReference type="Gene3D" id="2.60.40.1730">
    <property type="entry name" value="tricorn interacting facor f3 domain"/>
    <property type="match status" value="1"/>
</dbReference>
<dbReference type="InterPro" id="IPR042097">
    <property type="entry name" value="Aminopeptidase_N-like_N_sf"/>
</dbReference>
<dbReference type="InterPro" id="IPR027268">
    <property type="entry name" value="Peptidase_M4/M1_CTD_sf"/>
</dbReference>
<dbReference type="InterPro" id="IPR037813">
    <property type="entry name" value="TAF2"/>
</dbReference>
<dbReference type="PANTHER" id="PTHR15137">
    <property type="entry name" value="TRANSCRIPTION INITIATION FACTOR TFIID"/>
    <property type="match status" value="1"/>
</dbReference>
<dbReference type="PANTHER" id="PTHR15137:SF9">
    <property type="entry name" value="TRANSCRIPTION INITIATION FACTOR TFIID SUBUNIT 2"/>
    <property type="match status" value="1"/>
</dbReference>
<dbReference type="Pfam" id="PF25316">
    <property type="entry name" value="TAF2_3rd"/>
    <property type="match status" value="1"/>
</dbReference>
<dbReference type="SUPFAM" id="SSF63737">
    <property type="entry name" value="Leukotriene A4 hydrolase N-terminal domain"/>
    <property type="match status" value="1"/>
</dbReference>
<dbReference type="SUPFAM" id="SSF55486">
    <property type="entry name" value="Metalloproteases ('zincins'), catalytic domain"/>
    <property type="match status" value="1"/>
</dbReference>
<proteinExistence type="evidence at protein level"/>
<evidence type="ECO:0000255" key="1"/>
<evidence type="ECO:0000256" key="2">
    <source>
        <dbReference type="SAM" id="MobiDB-lite"/>
    </source>
</evidence>
<evidence type="ECO:0000269" key="3">
    <source>
    </source>
</evidence>
<evidence type="ECO:0000269" key="4">
    <source>
    </source>
</evidence>
<evidence type="ECO:0000269" key="5">
    <source>
    </source>
</evidence>
<evidence type="ECO:0000269" key="6">
    <source>
    </source>
</evidence>
<evidence type="ECO:0000305" key="7"/>
<evidence type="ECO:0007744" key="8">
    <source>
    </source>
</evidence>
<evidence type="ECO:0007744" key="9">
    <source>
    </source>
</evidence>
<evidence type="ECO:0007744" key="10">
    <source>
    </source>
</evidence>
<evidence type="ECO:0007829" key="11">
    <source>
        <dbReference type="PDB" id="7UHE"/>
    </source>
</evidence>
<feature type="chain" id="PRO_0000118867" description="Transcription initiation factor TFIID subunit 2">
    <location>
        <begin position="1"/>
        <end position="1407"/>
    </location>
</feature>
<feature type="region of interest" description="Disordered" evidence="2">
    <location>
        <begin position="252"/>
        <end position="336"/>
    </location>
</feature>
<feature type="region of interest" description="Highly charged">
    <location>
        <begin position="1285"/>
        <end position="1350"/>
    </location>
</feature>
<feature type="coiled-coil region" evidence="1">
    <location>
        <begin position="304"/>
        <end position="337"/>
    </location>
</feature>
<feature type="compositionally biased region" description="Basic and acidic residues" evidence="2">
    <location>
        <begin position="277"/>
        <end position="307"/>
    </location>
</feature>
<feature type="compositionally biased region" description="Acidic residues" evidence="2">
    <location>
        <begin position="308"/>
        <end position="326"/>
    </location>
</feature>
<feature type="modified residue" description="Phosphothreonine" evidence="10">
    <location>
        <position position="158"/>
    </location>
</feature>
<feature type="modified residue" description="Phosphothreonine" evidence="9 10">
    <location>
        <position position="161"/>
    </location>
</feature>
<feature type="modified residue" description="Phosphoserine" evidence="10">
    <location>
        <position position="163"/>
    </location>
</feature>
<feature type="modified residue" description="Phosphoserine" evidence="8">
    <location>
        <position position="318"/>
    </location>
</feature>
<feature type="sequence conflict" description="In Ref. 2; AAA35179." evidence="7" ref="2">
    <original>E</original>
    <variation>G</variation>
    <location>
        <position position="323"/>
    </location>
</feature>
<feature type="strand" evidence="11">
    <location>
        <begin position="1396"/>
        <end position="1400"/>
    </location>
</feature>
<protein>
    <recommendedName>
        <fullName>Transcription initiation factor TFIID subunit 2</fullName>
    </recommendedName>
    <alternativeName>
        <fullName>TAFII-150</fullName>
    </alternativeName>
    <alternativeName>
        <fullName>TBP-associated factor 150 kDa</fullName>
    </alternativeName>
    <alternativeName>
        <fullName>TBP-associated factor 2</fullName>
    </alternativeName>
    <alternativeName>
        <fullName>TSM-1</fullName>
    </alternativeName>
</protein>
<gene>
    <name type="primary">TAF2</name>
    <name type="synonym">TAF150</name>
    <name type="synonym">TSM1</name>
    <name type="ordered locus">YCR042C</name>
    <name type="ORF">YCR42C</name>
    <name type="ORF">YCR724</name>
</gene>
<comment type="function">
    <text evidence="3 4 5">Functions as a component of the DNA-binding general transcription factor complex TFIID. Binding of TFIID to a promoter (with or without TATA element) is the initial step in pre-initiation complex (PIC) formation. TFIID plays a key role in the regulation of gene expression by RNA polymerase II through different activities such as transcription activator interaction, core promoter recognition and selectivity, TFIIA and TFIIB interaction, chromatin modification (histone acetylation by TAF1), facilitation of DNA opening and initiation of transcription.</text>
</comment>
<comment type="subunit">
    <text evidence="3">The 1.2 MDa TFIID complex is composed of TATA binding protein (TBP) and the 14 TBP-associated factors. One copy of each TAF1, TAF2, TAF3, TAF7, TAF8, TAF11, TAF13, two copies of each TAF4, TAF5, TAF6, TAF9, TAF10, TAF12, and three copies of TAF14.</text>
</comment>
<comment type="interaction">
    <interactant intactId="EBI-18862">
        <id>P23255</id>
    </interactant>
    <interactant intactId="EBI-18855">
        <id>P46677</id>
        <label>TAF1</label>
    </interactant>
    <organismsDiffer>false</organismsDiffer>
    <experiments>5</experiments>
</comment>
<comment type="interaction">
    <interactant intactId="EBI-18862">
        <id>P23255</id>
    </interactant>
    <interactant intactId="EBI-18868">
        <id>P38129</id>
        <label>TAF5</label>
    </interactant>
    <organismsDiffer>false</organismsDiffer>
    <experiments>10</experiments>
</comment>
<comment type="subcellular location">
    <subcellularLocation>
        <location>Nucleus</location>
    </subcellularLocation>
</comment>
<comment type="miscellaneous">
    <text evidence="6">Present with 1200 molecules/cell in log phase SD medium.</text>
</comment>
<comment type="similarity">
    <text evidence="7">Belongs to the TAF2 family.</text>
</comment>
<keyword id="KW-0002">3D-structure</keyword>
<keyword id="KW-0175">Coiled coil</keyword>
<keyword id="KW-0903">Direct protein sequencing</keyword>
<keyword id="KW-0539">Nucleus</keyword>
<keyword id="KW-0597">Phosphoprotein</keyword>
<keyword id="KW-1185">Reference proteome</keyword>
<keyword id="KW-0804">Transcription</keyword>
<keyword id="KW-0805">Transcription regulation</keyword>
<name>TAF2_YEAST</name>